<name>SYTC2_HUMAN</name>
<reference key="1">
    <citation type="journal article" date="2004" name="Nat. Genet.">
        <title>Complete sequencing and characterization of 21,243 full-length human cDNAs.</title>
        <authorList>
            <person name="Ota T."/>
            <person name="Suzuki Y."/>
            <person name="Nishikawa T."/>
            <person name="Otsuki T."/>
            <person name="Sugiyama T."/>
            <person name="Irie R."/>
            <person name="Wakamatsu A."/>
            <person name="Hayashi K."/>
            <person name="Sato H."/>
            <person name="Nagai K."/>
            <person name="Kimura K."/>
            <person name="Makita H."/>
            <person name="Sekine M."/>
            <person name="Obayashi M."/>
            <person name="Nishi T."/>
            <person name="Shibahara T."/>
            <person name="Tanaka T."/>
            <person name="Ishii S."/>
            <person name="Yamamoto J."/>
            <person name="Saito K."/>
            <person name="Kawai Y."/>
            <person name="Isono Y."/>
            <person name="Nakamura Y."/>
            <person name="Nagahari K."/>
            <person name="Murakami K."/>
            <person name="Yasuda T."/>
            <person name="Iwayanagi T."/>
            <person name="Wagatsuma M."/>
            <person name="Shiratori A."/>
            <person name="Sudo H."/>
            <person name="Hosoiri T."/>
            <person name="Kaku Y."/>
            <person name="Kodaira H."/>
            <person name="Kondo H."/>
            <person name="Sugawara M."/>
            <person name="Takahashi M."/>
            <person name="Kanda K."/>
            <person name="Yokoi T."/>
            <person name="Furuya T."/>
            <person name="Kikkawa E."/>
            <person name="Omura Y."/>
            <person name="Abe K."/>
            <person name="Kamihara K."/>
            <person name="Katsuta N."/>
            <person name="Sato K."/>
            <person name="Tanikawa M."/>
            <person name="Yamazaki M."/>
            <person name="Ninomiya K."/>
            <person name="Ishibashi T."/>
            <person name="Yamashita H."/>
            <person name="Murakawa K."/>
            <person name="Fujimori K."/>
            <person name="Tanai H."/>
            <person name="Kimata M."/>
            <person name="Watanabe M."/>
            <person name="Hiraoka S."/>
            <person name="Chiba Y."/>
            <person name="Ishida S."/>
            <person name="Ono Y."/>
            <person name="Takiguchi S."/>
            <person name="Watanabe S."/>
            <person name="Yosida M."/>
            <person name="Hotuta T."/>
            <person name="Kusano J."/>
            <person name="Kanehori K."/>
            <person name="Takahashi-Fujii A."/>
            <person name="Hara H."/>
            <person name="Tanase T.-O."/>
            <person name="Nomura Y."/>
            <person name="Togiya S."/>
            <person name="Komai F."/>
            <person name="Hara R."/>
            <person name="Takeuchi K."/>
            <person name="Arita M."/>
            <person name="Imose N."/>
            <person name="Musashino K."/>
            <person name="Yuuki H."/>
            <person name="Oshima A."/>
            <person name="Sasaki N."/>
            <person name="Aotsuka S."/>
            <person name="Yoshikawa Y."/>
            <person name="Matsunawa H."/>
            <person name="Ichihara T."/>
            <person name="Shiohata N."/>
            <person name="Sano S."/>
            <person name="Moriya S."/>
            <person name="Momiyama H."/>
            <person name="Satoh N."/>
            <person name="Takami S."/>
            <person name="Terashima Y."/>
            <person name="Suzuki O."/>
            <person name="Nakagawa S."/>
            <person name="Senoh A."/>
            <person name="Mizoguchi H."/>
            <person name="Goto Y."/>
            <person name="Shimizu F."/>
            <person name="Wakebe H."/>
            <person name="Hishigaki H."/>
            <person name="Watanabe T."/>
            <person name="Sugiyama A."/>
            <person name="Takemoto M."/>
            <person name="Kawakami B."/>
            <person name="Yamazaki M."/>
            <person name="Watanabe K."/>
            <person name="Kumagai A."/>
            <person name="Itakura S."/>
            <person name="Fukuzumi Y."/>
            <person name="Fujimori Y."/>
            <person name="Komiyama M."/>
            <person name="Tashiro H."/>
            <person name="Tanigami A."/>
            <person name="Fujiwara T."/>
            <person name="Ono T."/>
            <person name="Yamada K."/>
            <person name="Fujii Y."/>
            <person name="Ozaki K."/>
            <person name="Hirao M."/>
            <person name="Ohmori Y."/>
            <person name="Kawabata A."/>
            <person name="Hikiji T."/>
            <person name="Kobatake N."/>
            <person name="Inagaki H."/>
            <person name="Ikema Y."/>
            <person name="Okamoto S."/>
            <person name="Okitani R."/>
            <person name="Kawakami T."/>
            <person name="Noguchi S."/>
            <person name="Itoh T."/>
            <person name="Shigeta K."/>
            <person name="Senba T."/>
            <person name="Matsumura K."/>
            <person name="Nakajima Y."/>
            <person name="Mizuno T."/>
            <person name="Morinaga M."/>
            <person name="Sasaki M."/>
            <person name="Togashi T."/>
            <person name="Oyama M."/>
            <person name="Hata H."/>
            <person name="Watanabe M."/>
            <person name="Komatsu T."/>
            <person name="Mizushima-Sugano J."/>
            <person name="Satoh T."/>
            <person name="Shirai Y."/>
            <person name="Takahashi Y."/>
            <person name="Nakagawa K."/>
            <person name="Okumura K."/>
            <person name="Nagase T."/>
            <person name="Nomura N."/>
            <person name="Kikuchi H."/>
            <person name="Masuho Y."/>
            <person name="Yamashita R."/>
            <person name="Nakai K."/>
            <person name="Yada T."/>
            <person name="Nakamura Y."/>
            <person name="Ohara O."/>
            <person name="Isogai T."/>
            <person name="Sugano S."/>
        </authorList>
    </citation>
    <scope>NUCLEOTIDE SEQUENCE [LARGE SCALE MRNA] (ISOFORM 2)</scope>
    <scope>NUCLEOTIDE SEQUENCE [LARGE SCALE MRNA] OF 315-802 (ISOFORM 1)</scope>
    <source>
        <tissue>Cerebellum</tissue>
    </source>
</reference>
<reference key="2">
    <citation type="submission" date="2005-07" db="EMBL/GenBank/DDBJ databases">
        <authorList>
            <person name="Mural R.J."/>
            <person name="Istrail S."/>
            <person name="Sutton G.G."/>
            <person name="Florea L."/>
            <person name="Halpern A.L."/>
            <person name="Mobarry C.M."/>
            <person name="Lippert R."/>
            <person name="Walenz B."/>
            <person name="Shatkay H."/>
            <person name="Dew I."/>
            <person name="Miller J.R."/>
            <person name="Flanigan M.J."/>
            <person name="Edwards N.J."/>
            <person name="Bolanos R."/>
            <person name="Fasulo D."/>
            <person name="Halldorsson B.V."/>
            <person name="Hannenhalli S."/>
            <person name="Turner R."/>
            <person name="Yooseph S."/>
            <person name="Lu F."/>
            <person name="Nusskern D.R."/>
            <person name="Shue B.C."/>
            <person name="Zheng X.H."/>
            <person name="Zhong F."/>
            <person name="Delcher A.L."/>
            <person name="Huson D.H."/>
            <person name="Kravitz S.A."/>
            <person name="Mouchard L."/>
            <person name="Reinert K."/>
            <person name="Remington K.A."/>
            <person name="Clark A.G."/>
            <person name="Waterman M.S."/>
            <person name="Eichler E.E."/>
            <person name="Adams M.D."/>
            <person name="Hunkapiller M.W."/>
            <person name="Myers E.W."/>
            <person name="Venter J.C."/>
        </authorList>
    </citation>
    <scope>NUCLEOTIDE SEQUENCE [LARGE SCALE GENOMIC DNA]</scope>
</reference>
<reference key="3">
    <citation type="journal article" date="2004" name="Genome Res.">
        <title>The status, quality, and expansion of the NIH full-length cDNA project: the Mammalian Gene Collection (MGC).</title>
        <authorList>
            <consortium name="The MGC Project Team"/>
        </authorList>
    </citation>
    <scope>NUCLEOTIDE SEQUENCE [LARGE SCALE MRNA] (ISOFORM 1)</scope>
    <scope>NUCLEOTIDE SEQUENCE [LARGE SCALE MRNA] OF 337-802 (ISOFORMS 1/2)</scope>
    <source>
        <tissue>Brain</tissue>
        <tissue>Lung</tissue>
    </source>
</reference>
<reference key="4">
    <citation type="journal article" date="2011" name="BMC Syst. Biol.">
        <title>Initial characterization of the human central proteome.</title>
        <authorList>
            <person name="Burkard T.R."/>
            <person name="Planyavsky M."/>
            <person name="Kaupe I."/>
            <person name="Breitwieser F.P."/>
            <person name="Buerckstuemmer T."/>
            <person name="Bennett K.L."/>
            <person name="Superti-Furga G."/>
            <person name="Colinge J."/>
        </authorList>
    </citation>
    <scope>IDENTIFICATION BY MASS SPECTROMETRY [LARGE SCALE ANALYSIS]</scope>
</reference>
<reference key="5">
    <citation type="journal article" date="2012" name="Proc. Natl. Acad. Sci. U.S.A.">
        <title>N-terminal acetylome analyses and functional insights of the N-terminal acetyltransferase NatB.</title>
        <authorList>
            <person name="Van Damme P."/>
            <person name="Lasa M."/>
            <person name="Polevoda B."/>
            <person name="Gazquez C."/>
            <person name="Elosegui-Artola A."/>
            <person name="Kim D.S."/>
            <person name="De Juan-Pardo E."/>
            <person name="Demeyer K."/>
            <person name="Hole K."/>
            <person name="Larrea E."/>
            <person name="Timmerman E."/>
            <person name="Prieto J."/>
            <person name="Arnesen T."/>
            <person name="Sherman F."/>
            <person name="Gevaert K."/>
            <person name="Aldabe R."/>
        </authorList>
    </citation>
    <scope>ACETYLATION [LARGE SCALE ANALYSIS] AT ALA-2</scope>
    <scope>CLEAVAGE OF INITIATOR METHIONINE [LARGE SCALE ANALYSIS]</scope>
    <scope>IDENTIFICATION BY MASS SPECTROMETRY [LARGE SCALE ANALYSIS]</scope>
</reference>
<reference key="6">
    <citation type="journal article" date="2013" name="J. Proteome Res.">
        <title>Toward a comprehensive characterization of a human cancer cell phosphoproteome.</title>
        <authorList>
            <person name="Zhou H."/>
            <person name="Di Palma S."/>
            <person name="Preisinger C."/>
            <person name="Peng M."/>
            <person name="Polat A.N."/>
            <person name="Heck A.J."/>
            <person name="Mohammed S."/>
        </authorList>
    </citation>
    <scope>PHOSPHORYLATION [LARGE SCALE ANALYSIS] AT SER-453</scope>
    <scope>IDENTIFICATION BY MASS SPECTROMETRY [LARGE SCALE ANALYSIS]</scope>
    <source>
        <tissue>Erythroleukemia</tissue>
    </source>
</reference>
<reference key="7">
    <citation type="journal article" date="2013" name="PLoS ONE">
        <title>Reinvestigation of aminoacyl-tRNA synthetase core complex by affinity purification-mass spectrometry reveals TARSL2 as a potential member of the complex.</title>
        <authorList>
            <person name="Kim K."/>
            <person name="Park S.J."/>
            <person name="Na S."/>
            <person name="Kim J.S."/>
            <person name="Choi H."/>
            <person name="Kim Y.K."/>
            <person name="Paek E."/>
            <person name="Lee C."/>
        </authorList>
    </citation>
    <scope>PROTEIN SEQUENCE OF 114-126; 154-201; 271-287; 322-333; 358-386; 427-441; 446-461; 512-534; 596-623; 678-691 AND 698-712</scope>
    <scope>IDENTIFICATION IN THE MSC COMPLEX</scope>
    <scope>INTERACTION WITH EPRS1; AIMP1; AIMP2 AND KARS1</scope>
    <scope>IDENTIFICATION BY MASS SPECTROMETRY</scope>
</reference>
<proteinExistence type="evidence at protein level"/>
<gene>
    <name evidence="8" type="primary">TARS3</name>
    <name type="synonym">TARSL2</name>
</gene>
<accession>A2RTX5</accession>
<accession>B2RMP7</accession>
<accession>Q6B0A1</accession>
<accession>Q6IS76</accession>
<accession>Q96LW3</accession>
<accession>Q96MP4</accession>
<feature type="initiator methionine" description="Removed" evidence="9">
    <location>
        <position position="1"/>
    </location>
</feature>
<feature type="chain" id="PRO_0000333828" description="Threonine--tRNA ligase 2, cytoplasmic">
    <location>
        <begin position="2"/>
        <end position="802"/>
    </location>
</feature>
<feature type="domain" description="TGS" evidence="3">
    <location>
        <begin position="157"/>
        <end position="222"/>
    </location>
</feature>
<feature type="region of interest" description="Disordered" evidence="4">
    <location>
        <begin position="86"/>
        <end position="123"/>
    </location>
</feature>
<feature type="coiled-coil region" evidence="2">
    <location>
        <begin position="3"/>
        <end position="23"/>
    </location>
</feature>
<feature type="coiled-coil region" evidence="2">
    <location>
        <begin position="76"/>
        <end position="96"/>
    </location>
</feature>
<feature type="short sequence motif" description="Nuclear localization signal" evidence="1">
    <location>
        <begin position="786"/>
        <end position="792"/>
    </location>
</feature>
<feature type="compositionally biased region" description="Low complexity" evidence="4">
    <location>
        <begin position="86"/>
        <end position="98"/>
    </location>
</feature>
<feature type="compositionally biased region" description="Basic and acidic residues" evidence="4">
    <location>
        <begin position="106"/>
        <end position="123"/>
    </location>
</feature>
<feature type="modified residue" description="N-acetylalanine" evidence="9">
    <location>
        <position position="2"/>
    </location>
</feature>
<feature type="modified residue" description="Phosphoserine" evidence="10">
    <location>
        <position position="453"/>
    </location>
</feature>
<feature type="splice variant" id="VSP_033562" description="In isoform 2." evidence="6">
    <location>
        <begin position="225"/>
        <end position="319"/>
    </location>
</feature>
<feature type="sequence conflict" description="In Ref. 1; BAB71241." evidence="7" ref="1">
    <original>A</original>
    <variation>G</variation>
    <location>
        <position position="96"/>
    </location>
</feature>
<feature type="sequence conflict" description="In Ref. 1; BAB71241." evidence="7" ref="1">
    <original>V</original>
    <variation>A</variation>
    <location>
        <position position="166"/>
    </location>
</feature>
<feature type="sequence conflict" description="In Ref. 1; BAB71241." evidence="7" ref="1">
    <original>R</original>
    <variation>C</variation>
    <location>
        <position position="210"/>
    </location>
</feature>
<feature type="sequence conflict" description="In Ref. 3; AAH69346/AAH69811." evidence="7" ref="3">
    <original>I</original>
    <variation>N</variation>
    <location>
        <position position="337"/>
    </location>
</feature>
<feature type="sequence conflict" description="In Ref. 1; BAB71554." evidence="7" ref="1">
    <original>F</original>
    <variation>C</variation>
    <location>
        <position position="513"/>
    </location>
</feature>
<feature type="sequence conflict" description="In Ref. 1; BAB71554." evidence="7" ref="1">
    <original>R</original>
    <variation>G</variation>
    <location>
        <position position="533"/>
    </location>
</feature>
<dbReference type="EC" id="6.1.1.3" evidence="1"/>
<dbReference type="EMBL" id="AK056653">
    <property type="protein sequence ID" value="BAB71241.1"/>
    <property type="molecule type" value="mRNA"/>
</dbReference>
<dbReference type="EMBL" id="AK057734">
    <property type="protein sequence ID" value="BAB71554.1"/>
    <property type="status" value="ALT_INIT"/>
    <property type="molecule type" value="mRNA"/>
</dbReference>
<dbReference type="EMBL" id="CH471101">
    <property type="protein sequence ID" value="EAX02316.1"/>
    <property type="molecule type" value="Genomic_DNA"/>
</dbReference>
<dbReference type="EMBL" id="BC069346">
    <property type="protein sequence ID" value="AAH69346.1"/>
    <property type="molecule type" value="mRNA"/>
</dbReference>
<dbReference type="EMBL" id="BC069811">
    <property type="protein sequence ID" value="AAH69811.1"/>
    <property type="molecule type" value="mRNA"/>
</dbReference>
<dbReference type="EMBL" id="BC074887">
    <property type="protein sequence ID" value="AAH74887.1"/>
    <property type="molecule type" value="mRNA"/>
</dbReference>
<dbReference type="EMBL" id="BC132671">
    <property type="protein sequence ID" value="AAI32672.1"/>
    <property type="molecule type" value="mRNA"/>
</dbReference>
<dbReference type="EMBL" id="BC136315">
    <property type="protein sequence ID" value="AAI36316.1"/>
    <property type="molecule type" value="mRNA"/>
</dbReference>
<dbReference type="CCDS" id="CCDS10394.1">
    <molecule id="A2RTX5-1"/>
</dbReference>
<dbReference type="RefSeq" id="NP_689547.2">
    <molecule id="A2RTX5-1"/>
    <property type="nucleotide sequence ID" value="NM_152334.2"/>
</dbReference>
<dbReference type="SMR" id="A2RTX5"/>
<dbReference type="BioGRID" id="125822">
    <property type="interactions" value="66"/>
</dbReference>
<dbReference type="FunCoup" id="A2RTX5">
    <property type="interactions" value="1181"/>
</dbReference>
<dbReference type="IntAct" id="A2RTX5">
    <property type="interactions" value="52"/>
</dbReference>
<dbReference type="MINT" id="A2RTX5"/>
<dbReference type="STRING" id="9606.ENSP00000338093"/>
<dbReference type="GlyGen" id="A2RTX5">
    <property type="glycosylation" value="2 sites, 1 O-linked glycan (1 site)"/>
</dbReference>
<dbReference type="iPTMnet" id="A2RTX5"/>
<dbReference type="PhosphoSitePlus" id="A2RTX5"/>
<dbReference type="BioMuta" id="TARSL2"/>
<dbReference type="jPOST" id="A2RTX5"/>
<dbReference type="MassIVE" id="A2RTX5"/>
<dbReference type="PaxDb" id="9606-ENSP00000338093"/>
<dbReference type="PeptideAtlas" id="A2RTX5"/>
<dbReference type="ProteomicsDB" id="483">
    <molecule id="A2RTX5-1"/>
</dbReference>
<dbReference type="ProteomicsDB" id="484">
    <molecule id="A2RTX5-2"/>
</dbReference>
<dbReference type="Pumba" id="A2RTX5"/>
<dbReference type="Antibodypedia" id="53619">
    <property type="antibodies" value="136 antibodies from 21 providers"/>
</dbReference>
<dbReference type="DNASU" id="123283"/>
<dbReference type="Ensembl" id="ENST00000335968.8">
    <molecule id="A2RTX5-1"/>
    <property type="protein sequence ID" value="ENSP00000338093.3"/>
    <property type="gene ID" value="ENSG00000185418.16"/>
</dbReference>
<dbReference type="GeneID" id="123283"/>
<dbReference type="KEGG" id="hsa:123283"/>
<dbReference type="MANE-Select" id="ENST00000335968.8">
    <property type="protein sequence ID" value="ENSP00000338093.3"/>
    <property type="RefSeq nucleotide sequence ID" value="NM_152334.3"/>
    <property type="RefSeq protein sequence ID" value="NP_689547.2"/>
</dbReference>
<dbReference type="UCSC" id="uc002bxm.4">
    <molecule id="A2RTX5-1"/>
    <property type="organism name" value="human"/>
</dbReference>
<dbReference type="AGR" id="HGNC:24728"/>
<dbReference type="CTD" id="123283"/>
<dbReference type="DisGeNET" id="123283"/>
<dbReference type="GeneCards" id="TARS3"/>
<dbReference type="HGNC" id="HGNC:24728">
    <property type="gene designation" value="TARS3"/>
</dbReference>
<dbReference type="HPA" id="ENSG00000185418">
    <property type="expression patterns" value="Tissue enhanced (skeletal muscle, tongue)"/>
</dbReference>
<dbReference type="neXtProt" id="NX_A2RTX5"/>
<dbReference type="OpenTargets" id="ENSG00000185418"/>
<dbReference type="PharmGKB" id="PA128394753"/>
<dbReference type="VEuPathDB" id="HostDB:ENSG00000185418"/>
<dbReference type="eggNOG" id="KOG1637">
    <property type="taxonomic scope" value="Eukaryota"/>
</dbReference>
<dbReference type="GeneTree" id="ENSGT00940000159348"/>
<dbReference type="InParanoid" id="A2RTX5"/>
<dbReference type="OMA" id="RIETRHD"/>
<dbReference type="OrthoDB" id="9478086at2759"/>
<dbReference type="PAN-GO" id="A2RTX5">
    <property type="GO annotations" value="2 GO annotations based on evolutionary models"/>
</dbReference>
<dbReference type="PhylomeDB" id="A2RTX5"/>
<dbReference type="TreeFam" id="TF300858"/>
<dbReference type="PathwayCommons" id="A2RTX5"/>
<dbReference type="SignaLink" id="A2RTX5"/>
<dbReference type="BioGRID-ORCS" id="123283">
    <property type="hits" value="9 hits in 1154 CRISPR screens"/>
</dbReference>
<dbReference type="CD-CODE" id="91857CE7">
    <property type="entry name" value="Nucleolus"/>
</dbReference>
<dbReference type="ChiTaRS" id="TARSL2">
    <property type="organism name" value="human"/>
</dbReference>
<dbReference type="GenomeRNAi" id="123283"/>
<dbReference type="Pharos" id="A2RTX5">
    <property type="development level" value="Tbio"/>
</dbReference>
<dbReference type="PRO" id="PR:A2RTX5"/>
<dbReference type="Proteomes" id="UP000005640">
    <property type="component" value="Chromosome 15"/>
</dbReference>
<dbReference type="RNAct" id="A2RTX5">
    <property type="molecule type" value="protein"/>
</dbReference>
<dbReference type="Bgee" id="ENSG00000185418">
    <property type="expression patterns" value="Expressed in corpus callosum and 175 other cell types or tissues"/>
</dbReference>
<dbReference type="ExpressionAtlas" id="A2RTX5">
    <property type="expression patterns" value="baseline and differential"/>
</dbReference>
<dbReference type="GO" id="GO:0005737">
    <property type="term" value="C:cytoplasm"/>
    <property type="evidence" value="ECO:0000250"/>
    <property type="project" value="UniProtKB"/>
</dbReference>
<dbReference type="GO" id="GO:0005739">
    <property type="term" value="C:mitochondrion"/>
    <property type="evidence" value="ECO:0000318"/>
    <property type="project" value="GO_Central"/>
</dbReference>
<dbReference type="GO" id="GO:0005634">
    <property type="term" value="C:nucleus"/>
    <property type="evidence" value="ECO:0000250"/>
    <property type="project" value="UniProtKB"/>
</dbReference>
<dbReference type="GO" id="GO:0005524">
    <property type="term" value="F:ATP binding"/>
    <property type="evidence" value="ECO:0007669"/>
    <property type="project" value="UniProtKB-KW"/>
</dbReference>
<dbReference type="GO" id="GO:0004829">
    <property type="term" value="F:threonine-tRNA ligase activity"/>
    <property type="evidence" value="ECO:0000250"/>
    <property type="project" value="UniProtKB"/>
</dbReference>
<dbReference type="GO" id="GO:0006435">
    <property type="term" value="P:threonyl-tRNA aminoacylation"/>
    <property type="evidence" value="ECO:0000250"/>
    <property type="project" value="UniProtKB"/>
</dbReference>
<dbReference type="CDD" id="cd01667">
    <property type="entry name" value="TGS_ThrRS"/>
    <property type="match status" value="1"/>
</dbReference>
<dbReference type="CDD" id="cd00860">
    <property type="entry name" value="ThrRS_anticodon"/>
    <property type="match status" value="1"/>
</dbReference>
<dbReference type="CDD" id="cd00771">
    <property type="entry name" value="ThrRS_core"/>
    <property type="match status" value="1"/>
</dbReference>
<dbReference type="FunFam" id="3.30.930.10:FF:000009">
    <property type="entry name" value="Threonine--tRNA ligase 2, cytoplasmic"/>
    <property type="match status" value="1"/>
</dbReference>
<dbReference type="FunFam" id="3.40.50.800:FF:000003">
    <property type="entry name" value="Threonine--tRNA ligase 2, cytoplasmic"/>
    <property type="match status" value="1"/>
</dbReference>
<dbReference type="FunFam" id="3.10.20.30:FF:000006">
    <property type="entry name" value="Threonine--tRNA ligase, cytoplasmic"/>
    <property type="match status" value="1"/>
</dbReference>
<dbReference type="FunFam" id="3.30.980.10:FF:000003">
    <property type="entry name" value="Threonine--tRNA ligase, cytoplasmic"/>
    <property type="match status" value="1"/>
</dbReference>
<dbReference type="Gene3D" id="3.10.20.30">
    <property type="match status" value="1"/>
</dbReference>
<dbReference type="Gene3D" id="3.40.50.800">
    <property type="entry name" value="Anticodon-binding domain"/>
    <property type="match status" value="1"/>
</dbReference>
<dbReference type="Gene3D" id="3.30.930.10">
    <property type="entry name" value="Bira Bifunctional Protein, Domain 2"/>
    <property type="match status" value="1"/>
</dbReference>
<dbReference type="Gene3D" id="3.30.980.10">
    <property type="entry name" value="Threonyl-trna Synthetase, Chain A, domain 2"/>
    <property type="match status" value="1"/>
</dbReference>
<dbReference type="HAMAP" id="MF_00184">
    <property type="entry name" value="Thr_tRNA_synth"/>
    <property type="match status" value="1"/>
</dbReference>
<dbReference type="InterPro" id="IPR002314">
    <property type="entry name" value="aa-tRNA-synt_IIb"/>
</dbReference>
<dbReference type="InterPro" id="IPR006195">
    <property type="entry name" value="aa-tRNA-synth_II"/>
</dbReference>
<dbReference type="InterPro" id="IPR045864">
    <property type="entry name" value="aa-tRNA-synth_II/BPL/LPL"/>
</dbReference>
<dbReference type="InterPro" id="IPR004154">
    <property type="entry name" value="Anticodon-bd"/>
</dbReference>
<dbReference type="InterPro" id="IPR036621">
    <property type="entry name" value="Anticodon-bd_dom_sf"/>
</dbReference>
<dbReference type="InterPro" id="IPR012675">
    <property type="entry name" value="Beta-grasp_dom_sf"/>
</dbReference>
<dbReference type="InterPro" id="IPR004095">
    <property type="entry name" value="TGS"/>
</dbReference>
<dbReference type="InterPro" id="IPR012676">
    <property type="entry name" value="TGS-like"/>
</dbReference>
<dbReference type="InterPro" id="IPR002320">
    <property type="entry name" value="Thr-tRNA-ligase_IIa"/>
</dbReference>
<dbReference type="InterPro" id="IPR018163">
    <property type="entry name" value="Thr/Ala-tRNA-synth_IIc_edit"/>
</dbReference>
<dbReference type="InterPro" id="IPR047246">
    <property type="entry name" value="ThrRS_anticodon"/>
</dbReference>
<dbReference type="InterPro" id="IPR033728">
    <property type="entry name" value="ThrRS_core"/>
</dbReference>
<dbReference type="InterPro" id="IPR012947">
    <property type="entry name" value="tRNA_SAD"/>
</dbReference>
<dbReference type="NCBIfam" id="TIGR00418">
    <property type="entry name" value="thrS"/>
    <property type="match status" value="1"/>
</dbReference>
<dbReference type="PANTHER" id="PTHR11451:SF38">
    <property type="entry name" value="THREONINE--TRNA LIGASE 2, CYTOPLASMIC"/>
    <property type="match status" value="1"/>
</dbReference>
<dbReference type="PANTHER" id="PTHR11451">
    <property type="entry name" value="THREONINE-TRNA LIGASE"/>
    <property type="match status" value="1"/>
</dbReference>
<dbReference type="Pfam" id="PF03129">
    <property type="entry name" value="HGTP_anticodon"/>
    <property type="match status" value="1"/>
</dbReference>
<dbReference type="Pfam" id="PF02824">
    <property type="entry name" value="TGS"/>
    <property type="match status" value="1"/>
</dbReference>
<dbReference type="Pfam" id="PF00587">
    <property type="entry name" value="tRNA-synt_2b"/>
    <property type="match status" value="1"/>
</dbReference>
<dbReference type="Pfam" id="PF07973">
    <property type="entry name" value="tRNA_SAD"/>
    <property type="match status" value="1"/>
</dbReference>
<dbReference type="PRINTS" id="PR01047">
    <property type="entry name" value="TRNASYNTHTHR"/>
</dbReference>
<dbReference type="SMART" id="SM00863">
    <property type="entry name" value="tRNA_SAD"/>
    <property type="match status" value="1"/>
</dbReference>
<dbReference type="SUPFAM" id="SSF52954">
    <property type="entry name" value="Class II aaRS ABD-related"/>
    <property type="match status" value="1"/>
</dbReference>
<dbReference type="SUPFAM" id="SSF55681">
    <property type="entry name" value="Class II aaRS and biotin synthetases"/>
    <property type="match status" value="1"/>
</dbReference>
<dbReference type="SUPFAM" id="SSF81271">
    <property type="entry name" value="TGS-like"/>
    <property type="match status" value="1"/>
</dbReference>
<dbReference type="SUPFAM" id="SSF55186">
    <property type="entry name" value="ThrRS/AlaRS common domain"/>
    <property type="match status" value="1"/>
</dbReference>
<dbReference type="PROSITE" id="PS50862">
    <property type="entry name" value="AA_TRNA_LIGASE_II"/>
    <property type="match status" value="1"/>
</dbReference>
<dbReference type="PROSITE" id="PS51880">
    <property type="entry name" value="TGS"/>
    <property type="match status" value="1"/>
</dbReference>
<keyword id="KW-0007">Acetylation</keyword>
<keyword id="KW-0025">Alternative splicing</keyword>
<keyword id="KW-0030">Aminoacyl-tRNA synthetase</keyword>
<keyword id="KW-0067">ATP-binding</keyword>
<keyword id="KW-0175">Coiled coil</keyword>
<keyword id="KW-0963">Cytoplasm</keyword>
<keyword id="KW-0903">Direct protein sequencing</keyword>
<keyword id="KW-0436">Ligase</keyword>
<keyword id="KW-0547">Nucleotide-binding</keyword>
<keyword id="KW-0539">Nucleus</keyword>
<keyword id="KW-0597">Phosphoprotein</keyword>
<keyword id="KW-0648">Protein biosynthesis</keyword>
<keyword id="KW-1267">Proteomics identification</keyword>
<keyword id="KW-1185">Reference proteome</keyword>
<comment type="function">
    <text evidence="1">Catalyzes the attachment of threonine to tRNA(Thr) in a two-step reaction: threonine is first activated by ATP to form Thr-AMP and then transferred to the acceptor end of tRNA(Thr). Also edits incorrectly charged tRNA(Thr) via its editing domain, at the post-transfer stage.</text>
</comment>
<comment type="catalytic activity">
    <reaction evidence="1">
        <text>tRNA(Thr) + L-threonine + ATP = L-threonyl-tRNA(Thr) + AMP + diphosphate + H(+)</text>
        <dbReference type="Rhea" id="RHEA:24624"/>
        <dbReference type="Rhea" id="RHEA-COMP:9670"/>
        <dbReference type="Rhea" id="RHEA-COMP:9704"/>
        <dbReference type="ChEBI" id="CHEBI:15378"/>
        <dbReference type="ChEBI" id="CHEBI:30616"/>
        <dbReference type="ChEBI" id="CHEBI:33019"/>
        <dbReference type="ChEBI" id="CHEBI:57926"/>
        <dbReference type="ChEBI" id="CHEBI:78442"/>
        <dbReference type="ChEBI" id="CHEBI:78534"/>
        <dbReference type="ChEBI" id="CHEBI:456215"/>
        <dbReference type="EC" id="6.1.1.3"/>
    </reaction>
</comment>
<comment type="subunit">
    <text evidence="5">May be a component of the multisynthetase complex (MSC), a large multi-subunit complex which contains at least eight different aminoacyl-tRNA synthetases plus three auxillary subunits AIMP1, AIMP2 and EEF1E1. Interacts with the MSC components EPRS1, AIMP1, AIMP2 and KARS1.</text>
</comment>
<comment type="interaction">
    <interactant intactId="EBI-1056629">
        <id>A2RTX5</id>
    </interactant>
    <interactant intactId="EBI-351829">
        <id>O15145</id>
        <label>ARPC3</label>
    </interactant>
    <organismsDiffer>false</organismsDiffer>
    <experiments>3</experiments>
</comment>
<comment type="interaction">
    <interactant intactId="EBI-1056629">
        <id>A2RTX5</id>
    </interactant>
    <interactant intactId="EBI-492498">
        <id>P18848</id>
        <label>ATF4</label>
    </interactant>
    <organismsDiffer>false</organismsDiffer>
    <experiments>3</experiments>
</comment>
<comment type="interaction">
    <interactant intactId="EBI-1056629">
        <id>A2RTX5</id>
    </interactant>
    <interactant intactId="EBI-712452">
        <id>Q9BQ95</id>
        <label>ECSIT</label>
    </interactant>
    <organismsDiffer>false</organismsDiffer>
    <experiments>3</experiments>
</comment>
<comment type="interaction">
    <interactant intactId="EBI-1056629">
        <id>A2RTX5</id>
    </interactant>
    <interactant intactId="EBI-10274069">
        <id>Q8TCE9</id>
        <label>LGALS14</label>
    </interactant>
    <organismsDiffer>false</organismsDiffer>
    <experiments>3</experiments>
</comment>
<comment type="interaction">
    <interactant intactId="EBI-1056629">
        <id>A2RTX5</id>
    </interactant>
    <interactant intactId="EBI-1042683">
        <id>P26639</id>
        <label>TARS1</label>
    </interactant>
    <organismsDiffer>false</organismsDiffer>
    <experiments>6</experiments>
</comment>
<comment type="interaction">
    <interactant intactId="EBI-1056629">
        <id>A2RTX5</id>
    </interactant>
    <interactant intactId="EBI-1045099">
        <id>Q9BW92</id>
        <label>TARS2</label>
    </interactant>
    <organismsDiffer>false</organismsDiffer>
    <experiments>3</experiments>
</comment>
<comment type="interaction">
    <interactant intactId="EBI-1056629">
        <id>A2RTX5</id>
    </interactant>
    <interactant intactId="EBI-11952721">
        <id>Q05BL1</id>
        <label>TP53BP2</label>
    </interactant>
    <organismsDiffer>false</organismsDiffer>
    <experiments>3</experiments>
</comment>
<comment type="interaction">
    <interactant intactId="EBI-1056629">
        <id>A2RTX5</id>
    </interactant>
    <interactant intactId="EBI-10173104">
        <id>B2RDX5</id>
    </interactant>
    <organismsDiffer>false</organismsDiffer>
    <experiments>3</experiments>
</comment>
<comment type="subcellular location">
    <subcellularLocation>
        <location evidence="1">Cytoplasm</location>
    </subcellularLocation>
    <subcellularLocation>
        <location evidence="1">Nucleus</location>
    </subcellularLocation>
    <text evidence="1">Primarily cytoplasmic. Also detected at lower levels in the nucleus.</text>
</comment>
<comment type="alternative products">
    <event type="alternative splicing"/>
    <isoform>
        <id>A2RTX5-1</id>
        <name>1</name>
        <sequence type="displayed"/>
    </isoform>
    <isoform>
        <id>A2RTX5-2</id>
        <name>2</name>
        <sequence type="described" ref="VSP_033562"/>
    </isoform>
</comment>
<comment type="similarity">
    <text evidence="7">Belongs to the class-II aminoacyl-tRNA synthetase family.</text>
</comment>
<comment type="sequence caution" evidence="7">
    <conflict type="erroneous initiation">
        <sequence resource="EMBL-CDS" id="BAB71554"/>
    </conflict>
</comment>
<evidence type="ECO:0000250" key="1">
    <source>
        <dbReference type="UniProtKB" id="Q8BLY2"/>
    </source>
</evidence>
<evidence type="ECO:0000255" key="2"/>
<evidence type="ECO:0000255" key="3">
    <source>
        <dbReference type="PROSITE-ProRule" id="PRU01228"/>
    </source>
</evidence>
<evidence type="ECO:0000256" key="4">
    <source>
        <dbReference type="SAM" id="MobiDB-lite"/>
    </source>
</evidence>
<evidence type="ECO:0000269" key="5">
    <source>
    </source>
</evidence>
<evidence type="ECO:0000303" key="6">
    <source>
    </source>
</evidence>
<evidence type="ECO:0000305" key="7"/>
<evidence type="ECO:0000312" key="8">
    <source>
        <dbReference type="HGNC" id="HGNC:24728"/>
    </source>
</evidence>
<evidence type="ECO:0007744" key="9">
    <source>
    </source>
</evidence>
<evidence type="ECO:0007744" key="10">
    <source>
    </source>
</evidence>
<sequence length="802" mass="92646">MAAEALAAEAVASRLERQEEDIRWLWSEVERLRDEQLNAPYSCQAEGPCLTREVAQLRAENCDLRHRLCSLRLCLAEERSRQATLESAELEAAQEAGAQPPPSQSQDKDMKKKKMKESEADSEVKHQPIFIKERLKLFEILKKDHQLLLAIYGKKGDTSNIITVRVADGQTVQGEVWKTTPYQVAAEISQELAESTVIAKVNGELWDLDRPLEGDSSLELLTFDNEEAQAVYWHSSAHILGEAMELYYGGHLCYGPPIENGFYYDMFIEDRAVSSTELSALENICKAIIKEKQPFERLEVSKEILLEMFKYNKFKCRILNEKVNTATTTVYRCGPLIDLCKGPHVRHTGKIKTIKIFKNSSTYWEGNPEMETLQRIYGISFPDNKMMRDWEKFQEEAKNRDHRKIGKEQELFFFHDLSPGSCFFLPRGAFIYNTLTDFIREEYHKRDFTEVLSPNMYNSKLWEASGHWQHYSENMFTFEIEKDTFALKPMNCPGHCLMFAHRPRSWREMPIRFADFGVLHRNELSGTLSGLTRVRRFQQDDAHIFCTVEQIEEEIKGCLQFLQSVYSTFGFSFQLNLSTRPENFLGEIEMWNEAEKQLQNSLMDFGEPWKMNPGDGAFYGPKIDIKIKDAIGRYHQCATIQLDFQLPIRFNLTYVSKDGDDKKRPVIIHRAILGSVERMIAILSENYGGKWPFWLSPRQVMVIPVGPTCEKYALQVSSEFFEEGFMADVDLDHSCTLNKKIRNAQLAQYNFILVVGEKEKIDNAVNVRTRDNKIHGEILVTSAIDKLKNLRKTRTLNAEEAF</sequence>
<organism>
    <name type="scientific">Homo sapiens</name>
    <name type="common">Human</name>
    <dbReference type="NCBI Taxonomy" id="9606"/>
    <lineage>
        <taxon>Eukaryota</taxon>
        <taxon>Metazoa</taxon>
        <taxon>Chordata</taxon>
        <taxon>Craniata</taxon>
        <taxon>Vertebrata</taxon>
        <taxon>Euteleostomi</taxon>
        <taxon>Mammalia</taxon>
        <taxon>Eutheria</taxon>
        <taxon>Euarchontoglires</taxon>
        <taxon>Primates</taxon>
        <taxon>Haplorrhini</taxon>
        <taxon>Catarrhini</taxon>
        <taxon>Hominidae</taxon>
        <taxon>Homo</taxon>
    </lineage>
</organism>
<protein>
    <recommendedName>
        <fullName evidence="7">Threonine--tRNA ligase 2, cytoplasmic</fullName>
        <ecNumber evidence="1">6.1.1.3</ecNumber>
    </recommendedName>
    <alternativeName>
        <fullName>Threonyl-tRNA synthetase</fullName>
        <shortName>ThrRS</shortName>
    </alternativeName>
    <alternativeName>
        <fullName>Threonyl-tRNA synthetase protein 3</fullName>
    </alternativeName>
</protein>